<organism>
    <name type="scientific">Mycobacterium tuberculosis (strain CDC 1551 / Oshkosh)</name>
    <dbReference type="NCBI Taxonomy" id="83331"/>
    <lineage>
        <taxon>Bacteria</taxon>
        <taxon>Bacillati</taxon>
        <taxon>Actinomycetota</taxon>
        <taxon>Actinomycetes</taxon>
        <taxon>Mycobacteriales</taxon>
        <taxon>Mycobacteriaceae</taxon>
        <taxon>Mycobacterium</taxon>
        <taxon>Mycobacterium tuberculosis complex</taxon>
    </lineage>
</organism>
<comment type="function">
    <text evidence="1">Catalyzes the oxidation of 5,10-methylenetetrahydrofolate to 5,10-methenyltetrahydrofolate and then the hydrolysis of 5,10-methenyltetrahydrofolate to 10-formyltetrahydrofolate.</text>
</comment>
<comment type="catalytic activity">
    <reaction evidence="1">
        <text>(6R)-5,10-methylene-5,6,7,8-tetrahydrofolate + NADP(+) = (6R)-5,10-methenyltetrahydrofolate + NADPH</text>
        <dbReference type="Rhea" id="RHEA:22812"/>
        <dbReference type="ChEBI" id="CHEBI:15636"/>
        <dbReference type="ChEBI" id="CHEBI:57455"/>
        <dbReference type="ChEBI" id="CHEBI:57783"/>
        <dbReference type="ChEBI" id="CHEBI:58349"/>
        <dbReference type="EC" id="1.5.1.5"/>
    </reaction>
</comment>
<comment type="catalytic activity">
    <reaction evidence="1">
        <text>(6R)-5,10-methenyltetrahydrofolate + H2O = (6R)-10-formyltetrahydrofolate + H(+)</text>
        <dbReference type="Rhea" id="RHEA:23700"/>
        <dbReference type="ChEBI" id="CHEBI:15377"/>
        <dbReference type="ChEBI" id="CHEBI:15378"/>
        <dbReference type="ChEBI" id="CHEBI:57455"/>
        <dbReference type="ChEBI" id="CHEBI:195366"/>
        <dbReference type="EC" id="3.5.4.9"/>
    </reaction>
</comment>
<comment type="pathway">
    <text evidence="1">One-carbon metabolism; tetrahydrofolate interconversion.</text>
</comment>
<comment type="subunit">
    <text evidence="1">Homodimer.</text>
</comment>
<comment type="similarity">
    <text evidence="1">Belongs to the tetrahydrofolate dehydrogenase/cyclohydrolase family.</text>
</comment>
<comment type="sequence caution" evidence="2">
    <conflict type="erroneous initiation">
        <sequence resource="EMBL-CDS" id="AAK47803"/>
    </conflict>
</comment>
<keyword id="KW-0028">Amino-acid biosynthesis</keyword>
<keyword id="KW-0368">Histidine biosynthesis</keyword>
<keyword id="KW-0378">Hydrolase</keyword>
<keyword id="KW-0486">Methionine biosynthesis</keyword>
<keyword id="KW-0511">Multifunctional enzyme</keyword>
<keyword id="KW-0521">NADP</keyword>
<keyword id="KW-0554">One-carbon metabolism</keyword>
<keyword id="KW-0560">Oxidoreductase</keyword>
<keyword id="KW-0658">Purine biosynthesis</keyword>
<keyword id="KW-1185">Reference proteome</keyword>
<reference key="1">
    <citation type="journal article" date="2002" name="J. Bacteriol.">
        <title>Whole-genome comparison of Mycobacterium tuberculosis clinical and laboratory strains.</title>
        <authorList>
            <person name="Fleischmann R.D."/>
            <person name="Alland D."/>
            <person name="Eisen J.A."/>
            <person name="Carpenter L."/>
            <person name="White O."/>
            <person name="Peterson J.D."/>
            <person name="DeBoy R.T."/>
            <person name="Dodson R.J."/>
            <person name="Gwinn M.L."/>
            <person name="Haft D.H."/>
            <person name="Hickey E.K."/>
            <person name="Kolonay J.F."/>
            <person name="Nelson W.C."/>
            <person name="Umayam L.A."/>
            <person name="Ermolaeva M.D."/>
            <person name="Salzberg S.L."/>
            <person name="Delcher A."/>
            <person name="Utterback T.R."/>
            <person name="Weidman J.F."/>
            <person name="Khouri H.M."/>
            <person name="Gill J."/>
            <person name="Mikula A."/>
            <person name="Bishai W."/>
            <person name="Jacobs W.R. Jr."/>
            <person name="Venter J.C."/>
            <person name="Fraser C.M."/>
        </authorList>
    </citation>
    <scope>NUCLEOTIDE SEQUENCE [LARGE SCALE GENOMIC DNA]</scope>
    <source>
        <strain>CDC 1551 / Oshkosh</strain>
    </source>
</reference>
<evidence type="ECO:0000255" key="1">
    <source>
        <dbReference type="HAMAP-Rule" id="MF_01576"/>
    </source>
</evidence>
<evidence type="ECO:0000305" key="2"/>
<sequence>MGAIMLDGKATRDEIFGDLKQRVAALDAAGRTPGLGTILVGDDPGSQAYVRGKHADCAKVGITSIRRDLPADISTATLNETIDELNANPDCTGYIVQLPLPKHLDENAALERVDPAKDADGLHPTNLGRLVLGTPAPLPCTPRGIVHLLRRYDISIAGAHVVVIGRGVTVGRPLGLLLTRRSENATVTLCHTGTRDLPALTRQADIVVAAVGVAHLLTADMVRPGAAVIDVGVSRTDDGLVGDVHPDVWELAGHVSPNPGGVGPLTRAFLLTNVVELAERR</sequence>
<name>FOLD_MYCTO</name>
<protein>
    <recommendedName>
        <fullName evidence="1">Bifunctional protein FolD</fullName>
    </recommendedName>
    <domain>
        <recommendedName>
            <fullName evidence="1">Methylenetetrahydrofolate dehydrogenase</fullName>
            <ecNumber evidence="1">1.5.1.5</ecNumber>
        </recommendedName>
    </domain>
    <domain>
        <recommendedName>
            <fullName evidence="1">Methenyltetrahydrofolate cyclohydrolase</fullName>
            <ecNumber evidence="1">3.5.4.9</ecNumber>
        </recommendedName>
    </domain>
</protein>
<feature type="chain" id="PRO_0000428408" description="Bifunctional protein FolD">
    <location>
        <begin position="1"/>
        <end position="281"/>
    </location>
</feature>
<feature type="binding site" evidence="1">
    <location>
        <begin position="165"/>
        <end position="167"/>
    </location>
    <ligand>
        <name>NADP(+)</name>
        <dbReference type="ChEBI" id="CHEBI:58349"/>
    </ligand>
</feature>
<feature type="binding site" evidence="1">
    <location>
        <position position="192"/>
    </location>
    <ligand>
        <name>NADP(+)</name>
        <dbReference type="ChEBI" id="CHEBI:58349"/>
    </ligand>
</feature>
<feature type="binding site" evidence="1">
    <location>
        <position position="233"/>
    </location>
    <ligand>
        <name>NADP(+)</name>
        <dbReference type="ChEBI" id="CHEBI:58349"/>
    </ligand>
</feature>
<proteinExistence type="inferred from homology"/>
<dbReference type="EC" id="1.5.1.5" evidence="1"/>
<dbReference type="EC" id="3.5.4.9" evidence="1"/>
<dbReference type="EMBL" id="AE000516">
    <property type="protein sequence ID" value="AAK47803.1"/>
    <property type="status" value="ALT_INIT"/>
    <property type="molecule type" value="Genomic_DNA"/>
</dbReference>
<dbReference type="PIR" id="C70970">
    <property type="entry name" value="C70970"/>
</dbReference>
<dbReference type="RefSeq" id="WP_003417751.1">
    <property type="nucleotide sequence ID" value="NZ_KK341227.1"/>
</dbReference>
<dbReference type="SMR" id="P9WG80"/>
<dbReference type="KEGG" id="mtc:MT3464"/>
<dbReference type="PATRIC" id="fig|83331.31.peg.3723"/>
<dbReference type="HOGENOM" id="CLU_034045_3_0_11"/>
<dbReference type="UniPathway" id="UPA00193"/>
<dbReference type="Proteomes" id="UP000001020">
    <property type="component" value="Chromosome"/>
</dbReference>
<dbReference type="GO" id="GO:0005829">
    <property type="term" value="C:cytosol"/>
    <property type="evidence" value="ECO:0007669"/>
    <property type="project" value="TreeGrafter"/>
</dbReference>
<dbReference type="GO" id="GO:0004477">
    <property type="term" value="F:methenyltetrahydrofolate cyclohydrolase activity"/>
    <property type="evidence" value="ECO:0007669"/>
    <property type="project" value="UniProtKB-UniRule"/>
</dbReference>
<dbReference type="GO" id="GO:0004488">
    <property type="term" value="F:methylenetetrahydrofolate dehydrogenase (NADP+) activity"/>
    <property type="evidence" value="ECO:0007669"/>
    <property type="project" value="UniProtKB-UniRule"/>
</dbReference>
<dbReference type="GO" id="GO:0000105">
    <property type="term" value="P:L-histidine biosynthetic process"/>
    <property type="evidence" value="ECO:0007669"/>
    <property type="project" value="UniProtKB-KW"/>
</dbReference>
<dbReference type="GO" id="GO:0009086">
    <property type="term" value="P:methionine biosynthetic process"/>
    <property type="evidence" value="ECO:0007669"/>
    <property type="project" value="UniProtKB-KW"/>
</dbReference>
<dbReference type="GO" id="GO:0006164">
    <property type="term" value="P:purine nucleotide biosynthetic process"/>
    <property type="evidence" value="ECO:0007669"/>
    <property type="project" value="UniProtKB-KW"/>
</dbReference>
<dbReference type="GO" id="GO:0035999">
    <property type="term" value="P:tetrahydrofolate interconversion"/>
    <property type="evidence" value="ECO:0007669"/>
    <property type="project" value="UniProtKB-UniRule"/>
</dbReference>
<dbReference type="CDD" id="cd01080">
    <property type="entry name" value="NAD_bind_m-THF_DH_Cyclohyd"/>
    <property type="match status" value="1"/>
</dbReference>
<dbReference type="FunFam" id="3.40.50.720:FF:000094">
    <property type="entry name" value="Bifunctional protein FolD"/>
    <property type="match status" value="1"/>
</dbReference>
<dbReference type="FunFam" id="3.40.50.10860:FF:000005">
    <property type="entry name" value="C-1-tetrahydrofolate synthase, cytoplasmic, putative"/>
    <property type="match status" value="1"/>
</dbReference>
<dbReference type="Gene3D" id="3.40.50.10860">
    <property type="entry name" value="Leucine Dehydrogenase, chain A, domain 1"/>
    <property type="match status" value="1"/>
</dbReference>
<dbReference type="Gene3D" id="3.40.50.720">
    <property type="entry name" value="NAD(P)-binding Rossmann-like Domain"/>
    <property type="match status" value="1"/>
</dbReference>
<dbReference type="HAMAP" id="MF_01576">
    <property type="entry name" value="THF_DHG_CYH"/>
    <property type="match status" value="1"/>
</dbReference>
<dbReference type="InterPro" id="IPR046346">
    <property type="entry name" value="Aminoacid_DH-like_N_sf"/>
</dbReference>
<dbReference type="InterPro" id="IPR036291">
    <property type="entry name" value="NAD(P)-bd_dom_sf"/>
</dbReference>
<dbReference type="InterPro" id="IPR000672">
    <property type="entry name" value="THF_DH/CycHdrlase"/>
</dbReference>
<dbReference type="InterPro" id="IPR020630">
    <property type="entry name" value="THF_DH/CycHdrlase_cat_dom"/>
</dbReference>
<dbReference type="InterPro" id="IPR020631">
    <property type="entry name" value="THF_DH/CycHdrlase_NAD-bd_dom"/>
</dbReference>
<dbReference type="NCBIfam" id="NF010789">
    <property type="entry name" value="PRK14193.1"/>
    <property type="match status" value="1"/>
</dbReference>
<dbReference type="PANTHER" id="PTHR48099:SF5">
    <property type="entry name" value="C-1-TETRAHYDROFOLATE SYNTHASE, CYTOPLASMIC"/>
    <property type="match status" value="1"/>
</dbReference>
<dbReference type="PANTHER" id="PTHR48099">
    <property type="entry name" value="C-1-TETRAHYDROFOLATE SYNTHASE, CYTOPLASMIC-RELATED"/>
    <property type="match status" value="1"/>
</dbReference>
<dbReference type="Pfam" id="PF00763">
    <property type="entry name" value="THF_DHG_CYH"/>
    <property type="match status" value="1"/>
</dbReference>
<dbReference type="Pfam" id="PF02882">
    <property type="entry name" value="THF_DHG_CYH_C"/>
    <property type="match status" value="1"/>
</dbReference>
<dbReference type="PRINTS" id="PR00085">
    <property type="entry name" value="THFDHDRGNASE"/>
</dbReference>
<dbReference type="SUPFAM" id="SSF53223">
    <property type="entry name" value="Aminoacid dehydrogenase-like, N-terminal domain"/>
    <property type="match status" value="1"/>
</dbReference>
<dbReference type="SUPFAM" id="SSF51735">
    <property type="entry name" value="NAD(P)-binding Rossmann-fold domains"/>
    <property type="match status" value="1"/>
</dbReference>
<gene>
    <name evidence="1" type="primary">folD</name>
    <name type="ordered locus">MT3464</name>
</gene>
<accession>P9WG80</accession>
<accession>L0TDW6</accession>
<accession>O50385</accession>
<accession>Q7D5N0</accession>